<protein>
    <recommendedName>
        <fullName evidence="1">Aspartate--tRNA(Asp/Asn) ligase</fullName>
        <ecNumber evidence="1">6.1.1.23</ecNumber>
    </recommendedName>
    <alternativeName>
        <fullName evidence="1">Aspartyl-tRNA synthetase</fullName>
        <shortName evidence="1">AspRS</shortName>
    </alternativeName>
    <alternativeName>
        <fullName evidence="1">Non-discriminating aspartyl-tRNA synthetase</fullName>
        <shortName evidence="1">ND-AspRS</shortName>
    </alternativeName>
</protein>
<sequence>MRTDYCGNINASHIGQTVTLCGWVNRRRDLGGVIFIDLRDREGIVQVVYDPDLAELFDTANSLRSEFCVQIEGLVRARPQGQVNKDMGTGEIEILGKGLTILNKSAVLPLDSNQENSEEQRLKYRYLDLRRPVMSDRLKFRAKVTSAVRSYLEGDGFLDIETPMLTKATPEGARDYLVPSRTHKGKFFALPQSPQLFKQLLMMSGMDRYYQIVKCFRDEDLRADRQPEFTQIDIETTFLGAEQVMKITEGMIRNLFMKMLNVDLGEFPQMTYADAMRRFGSDKPDLRNPLELVDVADILKDVEFKVFSGPANDAKGRVAVIRVPGGASMTRKQIDEYTKFVGIYGAKGLAWMKVNDIDAGLEGLQSPILKFLGEDVAKQVLSRVEAQSGDILLFGADSATVVTEALGALRLKVGEDLDLLEGEWKPLWVIDFPMFEEFDGQFYALHHPFTAPRDMTAEQLAADPANALSNAYDMVLNGCELGGGSVRIHNQDMQAKVFNILGISEEEAEVKFGFLLDALKFGAPPHAGLAFGLDRLVMLMTGATSIRDVMAFPKTTTAACPLTDAPGIASDEQLKELSIKTDIVQEKAPSAE</sequence>
<evidence type="ECO:0000255" key="1">
    <source>
        <dbReference type="HAMAP-Rule" id="MF_00044"/>
    </source>
</evidence>
<organism>
    <name type="scientific">Pseudoalteromonas atlantica (strain T6c / ATCC BAA-1087)</name>
    <dbReference type="NCBI Taxonomy" id="3042615"/>
    <lineage>
        <taxon>Bacteria</taxon>
        <taxon>Pseudomonadati</taxon>
        <taxon>Pseudomonadota</taxon>
        <taxon>Gammaproteobacteria</taxon>
        <taxon>Alteromonadales</taxon>
        <taxon>Alteromonadaceae</taxon>
        <taxon>Paraglaciecola</taxon>
    </lineage>
</organism>
<reference key="1">
    <citation type="submission" date="2006-06" db="EMBL/GenBank/DDBJ databases">
        <title>Complete sequence of Pseudoalteromonas atlantica T6c.</title>
        <authorList>
            <consortium name="US DOE Joint Genome Institute"/>
            <person name="Copeland A."/>
            <person name="Lucas S."/>
            <person name="Lapidus A."/>
            <person name="Barry K."/>
            <person name="Detter J.C."/>
            <person name="Glavina del Rio T."/>
            <person name="Hammon N."/>
            <person name="Israni S."/>
            <person name="Dalin E."/>
            <person name="Tice H."/>
            <person name="Pitluck S."/>
            <person name="Saunders E."/>
            <person name="Brettin T."/>
            <person name="Bruce D."/>
            <person name="Han C."/>
            <person name="Tapia R."/>
            <person name="Gilna P."/>
            <person name="Schmutz J."/>
            <person name="Larimer F."/>
            <person name="Land M."/>
            <person name="Hauser L."/>
            <person name="Kyrpides N."/>
            <person name="Kim E."/>
            <person name="Karls A.C."/>
            <person name="Bartlett D."/>
            <person name="Higgins B.P."/>
            <person name="Richardson P."/>
        </authorList>
    </citation>
    <scope>NUCLEOTIDE SEQUENCE [LARGE SCALE GENOMIC DNA]</scope>
    <source>
        <strain>T6c / ATCC BAA-1087</strain>
    </source>
</reference>
<accession>Q15RN2</accession>
<dbReference type="EC" id="6.1.1.23" evidence="1"/>
<dbReference type="EMBL" id="CP000388">
    <property type="protein sequence ID" value="ABG41456.1"/>
    <property type="molecule type" value="Genomic_DNA"/>
</dbReference>
<dbReference type="RefSeq" id="WP_011575710.1">
    <property type="nucleotide sequence ID" value="NC_008228.1"/>
</dbReference>
<dbReference type="SMR" id="Q15RN2"/>
<dbReference type="STRING" id="342610.Patl_2948"/>
<dbReference type="KEGG" id="pat:Patl_2948"/>
<dbReference type="eggNOG" id="COG0173">
    <property type="taxonomic scope" value="Bacteria"/>
</dbReference>
<dbReference type="HOGENOM" id="CLU_014330_3_2_6"/>
<dbReference type="OrthoDB" id="9802326at2"/>
<dbReference type="Proteomes" id="UP000001981">
    <property type="component" value="Chromosome"/>
</dbReference>
<dbReference type="GO" id="GO:0005737">
    <property type="term" value="C:cytoplasm"/>
    <property type="evidence" value="ECO:0007669"/>
    <property type="project" value="UniProtKB-SubCell"/>
</dbReference>
<dbReference type="GO" id="GO:0004815">
    <property type="term" value="F:aspartate-tRNA ligase activity"/>
    <property type="evidence" value="ECO:0007669"/>
    <property type="project" value="UniProtKB-UniRule"/>
</dbReference>
<dbReference type="GO" id="GO:0050560">
    <property type="term" value="F:aspartate-tRNA(Asn) ligase activity"/>
    <property type="evidence" value="ECO:0007669"/>
    <property type="project" value="UniProtKB-EC"/>
</dbReference>
<dbReference type="GO" id="GO:0005524">
    <property type="term" value="F:ATP binding"/>
    <property type="evidence" value="ECO:0007669"/>
    <property type="project" value="UniProtKB-UniRule"/>
</dbReference>
<dbReference type="GO" id="GO:0003676">
    <property type="term" value="F:nucleic acid binding"/>
    <property type="evidence" value="ECO:0007669"/>
    <property type="project" value="InterPro"/>
</dbReference>
<dbReference type="GO" id="GO:0006422">
    <property type="term" value="P:aspartyl-tRNA aminoacylation"/>
    <property type="evidence" value="ECO:0007669"/>
    <property type="project" value="UniProtKB-UniRule"/>
</dbReference>
<dbReference type="CDD" id="cd00777">
    <property type="entry name" value="AspRS_core"/>
    <property type="match status" value="1"/>
</dbReference>
<dbReference type="CDD" id="cd04317">
    <property type="entry name" value="EcAspRS_like_N"/>
    <property type="match status" value="1"/>
</dbReference>
<dbReference type="FunFam" id="2.40.50.140:FF:000080">
    <property type="entry name" value="Aspartate--tRNA ligase"/>
    <property type="match status" value="1"/>
</dbReference>
<dbReference type="Gene3D" id="3.30.930.10">
    <property type="entry name" value="Bira Bifunctional Protein, Domain 2"/>
    <property type="match status" value="1"/>
</dbReference>
<dbReference type="Gene3D" id="3.30.1360.30">
    <property type="entry name" value="GAD-like domain"/>
    <property type="match status" value="1"/>
</dbReference>
<dbReference type="Gene3D" id="2.40.50.140">
    <property type="entry name" value="Nucleic acid-binding proteins"/>
    <property type="match status" value="1"/>
</dbReference>
<dbReference type="HAMAP" id="MF_00044">
    <property type="entry name" value="Asp_tRNA_synth_type1"/>
    <property type="match status" value="1"/>
</dbReference>
<dbReference type="InterPro" id="IPR004364">
    <property type="entry name" value="Aa-tRNA-synt_II"/>
</dbReference>
<dbReference type="InterPro" id="IPR006195">
    <property type="entry name" value="aa-tRNA-synth_II"/>
</dbReference>
<dbReference type="InterPro" id="IPR045864">
    <property type="entry name" value="aa-tRNA-synth_II/BPL/LPL"/>
</dbReference>
<dbReference type="InterPro" id="IPR004524">
    <property type="entry name" value="Asp-tRNA-ligase_1"/>
</dbReference>
<dbReference type="InterPro" id="IPR047089">
    <property type="entry name" value="Asp-tRNA-ligase_1_N"/>
</dbReference>
<dbReference type="InterPro" id="IPR002312">
    <property type="entry name" value="Asp/Asn-tRNA-synth_IIb"/>
</dbReference>
<dbReference type="InterPro" id="IPR047090">
    <property type="entry name" value="AspRS_core"/>
</dbReference>
<dbReference type="InterPro" id="IPR004115">
    <property type="entry name" value="GAD-like_sf"/>
</dbReference>
<dbReference type="InterPro" id="IPR029351">
    <property type="entry name" value="GAD_dom"/>
</dbReference>
<dbReference type="InterPro" id="IPR012340">
    <property type="entry name" value="NA-bd_OB-fold"/>
</dbReference>
<dbReference type="InterPro" id="IPR004365">
    <property type="entry name" value="NA-bd_OB_tRNA"/>
</dbReference>
<dbReference type="NCBIfam" id="TIGR00459">
    <property type="entry name" value="aspS_bact"/>
    <property type="match status" value="1"/>
</dbReference>
<dbReference type="NCBIfam" id="NF001750">
    <property type="entry name" value="PRK00476.1"/>
    <property type="match status" value="1"/>
</dbReference>
<dbReference type="PANTHER" id="PTHR22594:SF5">
    <property type="entry name" value="ASPARTATE--TRNA LIGASE, MITOCHONDRIAL"/>
    <property type="match status" value="1"/>
</dbReference>
<dbReference type="PANTHER" id="PTHR22594">
    <property type="entry name" value="ASPARTYL/LYSYL-TRNA SYNTHETASE"/>
    <property type="match status" value="1"/>
</dbReference>
<dbReference type="Pfam" id="PF02938">
    <property type="entry name" value="GAD"/>
    <property type="match status" value="1"/>
</dbReference>
<dbReference type="Pfam" id="PF00152">
    <property type="entry name" value="tRNA-synt_2"/>
    <property type="match status" value="1"/>
</dbReference>
<dbReference type="Pfam" id="PF01336">
    <property type="entry name" value="tRNA_anti-codon"/>
    <property type="match status" value="1"/>
</dbReference>
<dbReference type="PRINTS" id="PR01042">
    <property type="entry name" value="TRNASYNTHASP"/>
</dbReference>
<dbReference type="SUPFAM" id="SSF55681">
    <property type="entry name" value="Class II aaRS and biotin synthetases"/>
    <property type="match status" value="1"/>
</dbReference>
<dbReference type="SUPFAM" id="SSF55261">
    <property type="entry name" value="GAD domain-like"/>
    <property type="match status" value="1"/>
</dbReference>
<dbReference type="SUPFAM" id="SSF50249">
    <property type="entry name" value="Nucleic acid-binding proteins"/>
    <property type="match status" value="1"/>
</dbReference>
<dbReference type="PROSITE" id="PS50862">
    <property type="entry name" value="AA_TRNA_LIGASE_II"/>
    <property type="match status" value="1"/>
</dbReference>
<name>SYDND_PSEA6</name>
<comment type="function">
    <text evidence="1">Aspartyl-tRNA synthetase with relaxed tRNA specificity since it is able to aspartylate not only its cognate tRNA(Asp) but also tRNA(Asn). Reaction proceeds in two steps: L-aspartate is first activated by ATP to form Asp-AMP and then transferred to the acceptor end of tRNA(Asp/Asn).</text>
</comment>
<comment type="catalytic activity">
    <reaction evidence="1">
        <text>tRNA(Asx) + L-aspartate + ATP = L-aspartyl-tRNA(Asx) + AMP + diphosphate</text>
        <dbReference type="Rhea" id="RHEA:18349"/>
        <dbReference type="Rhea" id="RHEA-COMP:9710"/>
        <dbReference type="Rhea" id="RHEA-COMP:9711"/>
        <dbReference type="ChEBI" id="CHEBI:29991"/>
        <dbReference type="ChEBI" id="CHEBI:30616"/>
        <dbReference type="ChEBI" id="CHEBI:33019"/>
        <dbReference type="ChEBI" id="CHEBI:78442"/>
        <dbReference type="ChEBI" id="CHEBI:78516"/>
        <dbReference type="ChEBI" id="CHEBI:456215"/>
        <dbReference type="EC" id="6.1.1.23"/>
    </reaction>
</comment>
<comment type="subunit">
    <text evidence="1">Homodimer.</text>
</comment>
<comment type="subcellular location">
    <subcellularLocation>
        <location evidence="1">Cytoplasm</location>
    </subcellularLocation>
</comment>
<comment type="similarity">
    <text evidence="1">Belongs to the class-II aminoacyl-tRNA synthetase family. Type 1 subfamily.</text>
</comment>
<keyword id="KW-0030">Aminoacyl-tRNA synthetase</keyword>
<keyword id="KW-0067">ATP-binding</keyword>
<keyword id="KW-0963">Cytoplasm</keyword>
<keyword id="KW-0436">Ligase</keyword>
<keyword id="KW-0547">Nucleotide-binding</keyword>
<keyword id="KW-0648">Protein biosynthesis</keyword>
<gene>
    <name evidence="1" type="primary">aspS</name>
    <name type="ordered locus">Patl_2948</name>
</gene>
<proteinExistence type="inferred from homology"/>
<feature type="chain" id="PRO_1000006727" description="Aspartate--tRNA(Asp/Asn) ligase">
    <location>
        <begin position="1"/>
        <end position="592"/>
    </location>
</feature>
<feature type="region of interest" description="Aspartate" evidence="1">
    <location>
        <begin position="195"/>
        <end position="198"/>
    </location>
</feature>
<feature type="binding site" evidence="1">
    <location>
        <position position="171"/>
    </location>
    <ligand>
        <name>L-aspartate</name>
        <dbReference type="ChEBI" id="CHEBI:29991"/>
    </ligand>
</feature>
<feature type="binding site" evidence="1">
    <location>
        <begin position="217"/>
        <end position="219"/>
    </location>
    <ligand>
        <name>ATP</name>
        <dbReference type="ChEBI" id="CHEBI:30616"/>
    </ligand>
</feature>
<feature type="binding site" evidence="1">
    <location>
        <position position="217"/>
    </location>
    <ligand>
        <name>L-aspartate</name>
        <dbReference type="ChEBI" id="CHEBI:29991"/>
    </ligand>
</feature>
<feature type="binding site" evidence="1">
    <location>
        <position position="226"/>
    </location>
    <ligand>
        <name>ATP</name>
        <dbReference type="ChEBI" id="CHEBI:30616"/>
    </ligand>
</feature>
<feature type="binding site" evidence="1">
    <location>
        <position position="446"/>
    </location>
    <ligand>
        <name>L-aspartate</name>
        <dbReference type="ChEBI" id="CHEBI:29991"/>
    </ligand>
</feature>
<feature type="binding site" evidence="1">
    <location>
        <position position="480"/>
    </location>
    <ligand>
        <name>ATP</name>
        <dbReference type="ChEBI" id="CHEBI:30616"/>
    </ligand>
</feature>
<feature type="binding site" evidence="1">
    <location>
        <position position="487"/>
    </location>
    <ligand>
        <name>L-aspartate</name>
        <dbReference type="ChEBI" id="CHEBI:29991"/>
    </ligand>
</feature>
<feature type="binding site" evidence="1">
    <location>
        <begin position="532"/>
        <end position="535"/>
    </location>
    <ligand>
        <name>ATP</name>
        <dbReference type="ChEBI" id="CHEBI:30616"/>
    </ligand>
</feature>
<feature type="site" description="Important for tRNA non-discrimination" evidence="1">
    <location>
        <position position="81"/>
    </location>
</feature>